<organism>
    <name type="scientific">Pongo pygmaeus</name>
    <name type="common">Bornean orangutan</name>
    <dbReference type="NCBI Taxonomy" id="9600"/>
    <lineage>
        <taxon>Eukaryota</taxon>
        <taxon>Metazoa</taxon>
        <taxon>Chordata</taxon>
        <taxon>Craniata</taxon>
        <taxon>Vertebrata</taxon>
        <taxon>Euteleostomi</taxon>
        <taxon>Mammalia</taxon>
        <taxon>Eutheria</taxon>
        <taxon>Euarchontoglires</taxon>
        <taxon>Primates</taxon>
        <taxon>Haplorrhini</taxon>
        <taxon>Catarrhini</taxon>
        <taxon>Hominidae</taxon>
        <taxon>Pongo</taxon>
    </lineage>
</organism>
<name>CCHCR_PONPY</name>
<protein>
    <recommendedName>
        <fullName>Coiled-coil alpha-helical rod protein 1</fullName>
    </recommendedName>
    <alternativeName>
        <fullName>Alpha-helical coiled-coil rod protein</fullName>
    </alternativeName>
</protein>
<proteinExistence type="inferred from homology"/>
<feature type="chain" id="PRO_0000089421" description="Coiled-coil alpha-helical rod protein 1">
    <location>
        <begin position="1"/>
        <end position="782"/>
    </location>
</feature>
<feature type="region of interest" description="Disordered" evidence="3">
    <location>
        <begin position="62"/>
        <end position="82"/>
    </location>
</feature>
<feature type="region of interest" description="Disordered" evidence="3">
    <location>
        <begin position="191"/>
        <end position="218"/>
    </location>
</feature>
<feature type="coiled-coil region" evidence="2">
    <location>
        <begin position="82"/>
        <end position="314"/>
    </location>
</feature>
<feature type="coiled-coil region" evidence="2">
    <location>
        <begin position="344"/>
        <end position="435"/>
    </location>
</feature>
<feature type="coiled-coil region" evidence="2">
    <location>
        <begin position="498"/>
        <end position="691"/>
    </location>
</feature>
<feature type="compositionally biased region" description="Basic and acidic residues" evidence="3">
    <location>
        <begin position="62"/>
        <end position="74"/>
    </location>
</feature>
<feature type="compositionally biased region" description="Basic and acidic residues" evidence="3">
    <location>
        <begin position="208"/>
        <end position="218"/>
    </location>
</feature>
<accession>Q8HZ58</accession>
<comment type="function">
    <text evidence="1">May be a regulator of keratinocyte proliferation or differentiation.</text>
</comment>
<comment type="subcellular location">
    <subcellularLocation>
        <location evidence="1">Cytoplasm</location>
    </subcellularLocation>
    <subcellularLocation>
        <location evidence="1">Nucleus</location>
    </subcellularLocation>
</comment>
<evidence type="ECO:0000250" key="1"/>
<evidence type="ECO:0000255" key="2"/>
<evidence type="ECO:0000256" key="3">
    <source>
        <dbReference type="SAM" id="MobiDB-lite"/>
    </source>
</evidence>
<reference key="1">
    <citation type="submission" date="2002-07" db="EMBL/GenBank/DDBJ databases">
        <title>HCR gene orthologs in chimpanzee, pygmy chimpanzee, gorilla, and orangutan.</title>
        <authorList>
            <person name="Asumalahti K."/>
            <person name="Kere J."/>
        </authorList>
    </citation>
    <scope>NUCLEOTIDE SEQUENCE [GENOMIC DNA]</scope>
</reference>
<dbReference type="EMBL" id="AY135813">
    <property type="protein sequence ID" value="AAN12281.1"/>
    <property type="molecule type" value="Genomic_DNA"/>
</dbReference>
<dbReference type="EMBL" id="AY135797">
    <property type="protein sequence ID" value="AAN12281.1"/>
    <property type="status" value="JOINED"/>
    <property type="molecule type" value="Genomic_DNA"/>
</dbReference>
<dbReference type="EMBL" id="AY135798">
    <property type="protein sequence ID" value="AAN12281.1"/>
    <property type="status" value="JOINED"/>
    <property type="molecule type" value="Genomic_DNA"/>
</dbReference>
<dbReference type="EMBL" id="AY135799">
    <property type="protein sequence ID" value="AAN12281.1"/>
    <property type="status" value="JOINED"/>
    <property type="molecule type" value="Genomic_DNA"/>
</dbReference>
<dbReference type="EMBL" id="AY135800">
    <property type="protein sequence ID" value="AAN12281.1"/>
    <property type="status" value="JOINED"/>
    <property type="molecule type" value="Genomic_DNA"/>
</dbReference>
<dbReference type="EMBL" id="AY135801">
    <property type="protein sequence ID" value="AAN12281.1"/>
    <property type="status" value="JOINED"/>
    <property type="molecule type" value="Genomic_DNA"/>
</dbReference>
<dbReference type="EMBL" id="AY135802">
    <property type="protein sequence ID" value="AAN12281.1"/>
    <property type="status" value="JOINED"/>
    <property type="molecule type" value="Genomic_DNA"/>
</dbReference>
<dbReference type="EMBL" id="AY135803">
    <property type="protein sequence ID" value="AAN12281.1"/>
    <property type="status" value="JOINED"/>
    <property type="molecule type" value="Genomic_DNA"/>
</dbReference>
<dbReference type="EMBL" id="AY135804">
    <property type="protein sequence ID" value="AAN12281.1"/>
    <property type="status" value="JOINED"/>
    <property type="molecule type" value="Genomic_DNA"/>
</dbReference>
<dbReference type="EMBL" id="AY135805">
    <property type="protein sequence ID" value="AAN12281.1"/>
    <property type="status" value="JOINED"/>
    <property type="molecule type" value="Genomic_DNA"/>
</dbReference>
<dbReference type="EMBL" id="AY135806">
    <property type="protein sequence ID" value="AAN12281.1"/>
    <property type="status" value="JOINED"/>
    <property type="molecule type" value="Genomic_DNA"/>
</dbReference>
<dbReference type="EMBL" id="AY135807">
    <property type="protein sequence ID" value="AAN12281.1"/>
    <property type="status" value="JOINED"/>
    <property type="molecule type" value="Genomic_DNA"/>
</dbReference>
<dbReference type="EMBL" id="AY135808">
    <property type="protein sequence ID" value="AAN12281.1"/>
    <property type="status" value="JOINED"/>
    <property type="molecule type" value="Genomic_DNA"/>
</dbReference>
<dbReference type="EMBL" id="AY135809">
    <property type="protein sequence ID" value="AAN12281.1"/>
    <property type="status" value="JOINED"/>
    <property type="molecule type" value="Genomic_DNA"/>
</dbReference>
<dbReference type="EMBL" id="AY135810">
    <property type="protein sequence ID" value="AAN12281.1"/>
    <property type="status" value="JOINED"/>
    <property type="molecule type" value="Genomic_DNA"/>
</dbReference>
<dbReference type="EMBL" id="AY135811">
    <property type="protein sequence ID" value="AAN12281.1"/>
    <property type="status" value="JOINED"/>
    <property type="molecule type" value="Genomic_DNA"/>
</dbReference>
<dbReference type="EMBL" id="AY135812">
    <property type="protein sequence ID" value="AAN12281.1"/>
    <property type="status" value="JOINED"/>
    <property type="molecule type" value="Genomic_DNA"/>
</dbReference>
<dbReference type="SMR" id="Q8HZ58"/>
<dbReference type="GO" id="GO:0005814">
    <property type="term" value="C:centriole"/>
    <property type="evidence" value="ECO:0000250"/>
    <property type="project" value="UniProtKB"/>
</dbReference>
<dbReference type="GO" id="GO:0005737">
    <property type="term" value="C:cytoplasm"/>
    <property type="evidence" value="ECO:0007669"/>
    <property type="project" value="UniProtKB-SubCell"/>
</dbReference>
<dbReference type="GO" id="GO:0005634">
    <property type="term" value="C:nucleus"/>
    <property type="evidence" value="ECO:0007669"/>
    <property type="project" value="UniProtKB-SubCell"/>
</dbReference>
<dbReference type="GO" id="GO:0030154">
    <property type="term" value="P:cell differentiation"/>
    <property type="evidence" value="ECO:0007669"/>
    <property type="project" value="UniProtKB-KW"/>
</dbReference>
<dbReference type="GO" id="GO:0006611">
    <property type="term" value="P:protein export from nucleus"/>
    <property type="evidence" value="ECO:0007669"/>
    <property type="project" value="TreeGrafter"/>
</dbReference>
<dbReference type="InterPro" id="IPR009800">
    <property type="entry name" value="HCR"/>
</dbReference>
<dbReference type="PANTHER" id="PTHR46822">
    <property type="entry name" value="COILED-COIL ALPHA-HELICAL ROD PROTEIN 1"/>
    <property type="match status" value="1"/>
</dbReference>
<dbReference type="PANTHER" id="PTHR46822:SF1">
    <property type="entry name" value="COILED-COIL ALPHA-HELICAL ROD PROTEIN 1"/>
    <property type="match status" value="1"/>
</dbReference>
<dbReference type="Pfam" id="PF07111">
    <property type="entry name" value="HCR"/>
    <property type="match status" value="1"/>
</dbReference>
<sequence>MFPPSGSTGLIPPSHFQARPLSTLPRMAPTWLSDIPLVQPPGHQDVSERRLDTQRPQVTMWERDVSSDRQEPGRRGRSWGLEGSQALSQQAEVIARQLQELRRLEEEVRLLRETSLQQKMRLEAQAMELEALARAEKAGRTEAEGLRAALAGAEVIRKNLEEGSQRELEEVQRLHQEQLSSLTQAHEEALSSLTSKAEGLEKSLSSLETRRAGEAKELAEAQREAELLRKQLSKTQEDLEAQVTLVENLRKYVGEQVPSEVHSQTWELERQKLLETMQHLQEDRDSLQATVELLQVRVQSLTHILALQEEELTRKVQPSDSLEPEFTRKCQFLLNRWREKVFALMVQLKAQELEHSDSVKQLKGQVASLQEQVTSQSQEQAILQRSLQDKAAEVEVERIGAKGLQLELSRAQEARHRWQQQTASAEEQLRLVVNAVSSSQIWLETTMAKVEEAAAQLPSLNNRLSYAVRKVHTIRGLIARKLALAQLRQESCPLPPPVADVSLELQQLREERNRLDAELQLSARLIQQEVGRAREQGEAERQQLSKVAQQLEQELQQTQESLASLGLQLEVARQGQQESTEEAASLRQELTQQQELYGQALQEKVAEVETQLREQLSDTERRLNEARREHAKAVVSLRQIQRRAAQEKERSQELRRLQEEARKEEGQRLARRLQELERDKNLMLATLQQEGLLSRYKQQRLLTVLPSLLDKKKSVVSSPRPPECSASAPIAAAVPTRESIKGSLSVLLDDLQGLSEAISKEEAVCQGDNLDRCSSSNPQMSS</sequence>
<keyword id="KW-0175">Coiled coil</keyword>
<keyword id="KW-0963">Cytoplasm</keyword>
<keyword id="KW-0217">Developmental protein</keyword>
<keyword id="KW-0221">Differentiation</keyword>
<keyword id="KW-0539">Nucleus</keyword>
<gene>
    <name type="primary">CCHCR1</name>
    <name type="synonym">HCR</name>
</gene>